<dbReference type="EC" id="3.2.2.27" evidence="1"/>
<dbReference type="EMBL" id="CP000644">
    <property type="protein sequence ID" value="ABO89293.1"/>
    <property type="molecule type" value="Genomic_DNA"/>
</dbReference>
<dbReference type="RefSeq" id="WP_005316980.1">
    <property type="nucleotide sequence ID" value="NC_009348.1"/>
</dbReference>
<dbReference type="SMR" id="A4SK71"/>
<dbReference type="STRING" id="29491.GCA_000820065_00932"/>
<dbReference type="GeneID" id="79878822"/>
<dbReference type="KEGG" id="asa:ASA_1183"/>
<dbReference type="eggNOG" id="COG0692">
    <property type="taxonomic scope" value="Bacteria"/>
</dbReference>
<dbReference type="HOGENOM" id="CLU_032162_3_0_6"/>
<dbReference type="Proteomes" id="UP000000225">
    <property type="component" value="Chromosome"/>
</dbReference>
<dbReference type="GO" id="GO:0005737">
    <property type="term" value="C:cytoplasm"/>
    <property type="evidence" value="ECO:0007669"/>
    <property type="project" value="UniProtKB-SubCell"/>
</dbReference>
<dbReference type="GO" id="GO:0004844">
    <property type="term" value="F:uracil DNA N-glycosylase activity"/>
    <property type="evidence" value="ECO:0007669"/>
    <property type="project" value="UniProtKB-UniRule"/>
</dbReference>
<dbReference type="GO" id="GO:0097510">
    <property type="term" value="P:base-excision repair, AP site formation via deaminated base removal"/>
    <property type="evidence" value="ECO:0007669"/>
    <property type="project" value="TreeGrafter"/>
</dbReference>
<dbReference type="CDD" id="cd10027">
    <property type="entry name" value="UDG-F1-like"/>
    <property type="match status" value="1"/>
</dbReference>
<dbReference type="FunFam" id="3.40.470.10:FF:000001">
    <property type="entry name" value="Uracil-DNA glycosylase"/>
    <property type="match status" value="1"/>
</dbReference>
<dbReference type="Gene3D" id="3.40.470.10">
    <property type="entry name" value="Uracil-DNA glycosylase-like domain"/>
    <property type="match status" value="1"/>
</dbReference>
<dbReference type="HAMAP" id="MF_00148">
    <property type="entry name" value="UDG"/>
    <property type="match status" value="1"/>
</dbReference>
<dbReference type="InterPro" id="IPR002043">
    <property type="entry name" value="UDG_fam1"/>
</dbReference>
<dbReference type="InterPro" id="IPR018085">
    <property type="entry name" value="Ura-DNA_Glyclase_AS"/>
</dbReference>
<dbReference type="InterPro" id="IPR005122">
    <property type="entry name" value="Uracil-DNA_glycosylase-like"/>
</dbReference>
<dbReference type="InterPro" id="IPR036895">
    <property type="entry name" value="Uracil-DNA_glycosylase-like_sf"/>
</dbReference>
<dbReference type="NCBIfam" id="NF003588">
    <property type="entry name" value="PRK05254.1-1"/>
    <property type="match status" value="1"/>
</dbReference>
<dbReference type="NCBIfam" id="NF003589">
    <property type="entry name" value="PRK05254.1-2"/>
    <property type="match status" value="1"/>
</dbReference>
<dbReference type="NCBIfam" id="NF003591">
    <property type="entry name" value="PRK05254.1-4"/>
    <property type="match status" value="1"/>
</dbReference>
<dbReference type="NCBIfam" id="NF003592">
    <property type="entry name" value="PRK05254.1-5"/>
    <property type="match status" value="1"/>
</dbReference>
<dbReference type="NCBIfam" id="TIGR00628">
    <property type="entry name" value="ung"/>
    <property type="match status" value="1"/>
</dbReference>
<dbReference type="PANTHER" id="PTHR11264">
    <property type="entry name" value="URACIL-DNA GLYCOSYLASE"/>
    <property type="match status" value="1"/>
</dbReference>
<dbReference type="PANTHER" id="PTHR11264:SF0">
    <property type="entry name" value="URACIL-DNA GLYCOSYLASE"/>
    <property type="match status" value="1"/>
</dbReference>
<dbReference type="Pfam" id="PF03167">
    <property type="entry name" value="UDG"/>
    <property type="match status" value="1"/>
</dbReference>
<dbReference type="SMART" id="SM00986">
    <property type="entry name" value="UDG"/>
    <property type="match status" value="1"/>
</dbReference>
<dbReference type="SMART" id="SM00987">
    <property type="entry name" value="UreE_C"/>
    <property type="match status" value="1"/>
</dbReference>
<dbReference type="SUPFAM" id="SSF52141">
    <property type="entry name" value="Uracil-DNA glycosylase-like"/>
    <property type="match status" value="1"/>
</dbReference>
<dbReference type="PROSITE" id="PS00130">
    <property type="entry name" value="U_DNA_GLYCOSYLASE"/>
    <property type="match status" value="1"/>
</dbReference>
<comment type="function">
    <text evidence="1">Excises uracil residues from the DNA which can arise as a result of misincorporation of dUMP residues by DNA polymerase or due to deamination of cytosine.</text>
</comment>
<comment type="catalytic activity">
    <reaction evidence="1">
        <text>Hydrolyzes single-stranded DNA or mismatched double-stranded DNA and polynucleotides, releasing free uracil.</text>
        <dbReference type="EC" id="3.2.2.27"/>
    </reaction>
</comment>
<comment type="subcellular location">
    <subcellularLocation>
        <location evidence="1">Cytoplasm</location>
    </subcellularLocation>
</comment>
<comment type="similarity">
    <text evidence="1">Belongs to the uracil-DNA glycosylase (UDG) superfamily. UNG family.</text>
</comment>
<gene>
    <name evidence="1" type="primary">ung</name>
    <name type="ordered locus">ASA_1183</name>
</gene>
<organism>
    <name type="scientific">Aeromonas salmonicida (strain A449)</name>
    <dbReference type="NCBI Taxonomy" id="382245"/>
    <lineage>
        <taxon>Bacteria</taxon>
        <taxon>Pseudomonadati</taxon>
        <taxon>Pseudomonadota</taxon>
        <taxon>Gammaproteobacteria</taxon>
        <taxon>Aeromonadales</taxon>
        <taxon>Aeromonadaceae</taxon>
        <taxon>Aeromonas</taxon>
    </lineage>
</organism>
<evidence type="ECO:0000255" key="1">
    <source>
        <dbReference type="HAMAP-Rule" id="MF_00148"/>
    </source>
</evidence>
<name>UNG_AERS4</name>
<protein>
    <recommendedName>
        <fullName evidence="1">Uracil-DNA glycosylase</fullName>
        <shortName evidence="1">UDG</shortName>
        <ecNumber evidence="1">3.2.2.27</ecNumber>
    </recommendedName>
</protein>
<proteinExistence type="inferred from homology"/>
<sequence length="222" mass="24745">MRTWTDVIGSEKEQDYFKATLATVRSEREAGKVIYPPATEVFNAFKLTELDQVKVVILGQDPYHGPNQAHGLCFSVLPGVRTPPSLVNIYKEMQRDLPDFVTPNHGFLESWAQQGVLLLNTVLTVQAGMAHSHAHLGWETFTDRVIEQINASCQGVVFLLWGAHAQKKGRFIDRSRHHVLSAPHPSPLSAHRGFIGCGHFSETNRLLSQQGMSPINWHSVCG</sequence>
<accession>A4SK71</accession>
<feature type="chain" id="PRO_1000071497" description="Uracil-DNA glycosylase">
    <location>
        <begin position="1"/>
        <end position="222"/>
    </location>
</feature>
<feature type="active site" description="Proton acceptor" evidence="1">
    <location>
        <position position="61"/>
    </location>
</feature>
<reference key="1">
    <citation type="journal article" date="2008" name="BMC Genomics">
        <title>The genome of Aeromonas salmonicida subsp. salmonicida A449: insights into the evolution of a fish pathogen.</title>
        <authorList>
            <person name="Reith M.E."/>
            <person name="Singh R.K."/>
            <person name="Curtis B."/>
            <person name="Boyd J.M."/>
            <person name="Bouevitch A."/>
            <person name="Kimball J."/>
            <person name="Munholland J."/>
            <person name="Murphy C."/>
            <person name="Sarty D."/>
            <person name="Williams J."/>
            <person name="Nash J.H."/>
            <person name="Johnson S.C."/>
            <person name="Brown L.L."/>
        </authorList>
    </citation>
    <scope>NUCLEOTIDE SEQUENCE [LARGE SCALE GENOMIC DNA]</scope>
    <source>
        <strain>A449</strain>
    </source>
</reference>
<keyword id="KW-0963">Cytoplasm</keyword>
<keyword id="KW-0227">DNA damage</keyword>
<keyword id="KW-0234">DNA repair</keyword>
<keyword id="KW-0378">Hydrolase</keyword>